<feature type="chain" id="PRO_1000184742" description="ATP synthase subunit delta">
    <location>
        <begin position="1"/>
        <end position="187"/>
    </location>
</feature>
<reference key="1">
    <citation type="journal article" date="2008" name="PLoS ONE">
        <title>Genome sequence of the saprophyte Leptospira biflexa provides insights into the evolution of Leptospira and the pathogenesis of leptospirosis.</title>
        <authorList>
            <person name="Picardeau M."/>
            <person name="Bulach D.M."/>
            <person name="Bouchier C."/>
            <person name="Zuerner R.L."/>
            <person name="Zidane N."/>
            <person name="Wilson P.J."/>
            <person name="Creno S."/>
            <person name="Kuczek E.S."/>
            <person name="Bommezzadri S."/>
            <person name="Davis J.C."/>
            <person name="McGrath A."/>
            <person name="Johnson M.J."/>
            <person name="Boursaux-Eude C."/>
            <person name="Seemann T."/>
            <person name="Rouy Z."/>
            <person name="Coppel R.L."/>
            <person name="Rood J.I."/>
            <person name="Lajus A."/>
            <person name="Davies J.K."/>
            <person name="Medigue C."/>
            <person name="Adler B."/>
        </authorList>
    </citation>
    <scope>NUCLEOTIDE SEQUENCE [LARGE SCALE GENOMIC DNA]</scope>
    <source>
        <strain>Patoc 1 / ATCC 23582 / Paris</strain>
    </source>
</reference>
<protein>
    <recommendedName>
        <fullName evidence="1">ATP synthase subunit delta</fullName>
    </recommendedName>
    <alternativeName>
        <fullName evidence="1">ATP synthase F(1) sector subunit delta</fullName>
    </alternativeName>
    <alternativeName>
        <fullName evidence="1">F-type ATPase subunit delta</fullName>
        <shortName evidence="1">F-ATPase subunit delta</shortName>
    </alternativeName>
</protein>
<gene>
    <name evidence="1" type="primary">atpH</name>
    <name type="ordered locus">LEPBI_I0804</name>
</gene>
<evidence type="ECO:0000255" key="1">
    <source>
        <dbReference type="HAMAP-Rule" id="MF_01416"/>
    </source>
</evidence>
<name>ATPD_LEPBP</name>
<dbReference type="EMBL" id="CP000786">
    <property type="protein sequence ID" value="ABZ96932.1"/>
    <property type="molecule type" value="Genomic_DNA"/>
</dbReference>
<dbReference type="RefSeq" id="WP_012387817.1">
    <property type="nucleotide sequence ID" value="NC_010602.1"/>
</dbReference>
<dbReference type="SMR" id="B0SLC5"/>
<dbReference type="STRING" id="456481.LEPBI_I0804"/>
<dbReference type="KEGG" id="lbi:LEPBI_I0804"/>
<dbReference type="HOGENOM" id="CLU_085114_4_0_12"/>
<dbReference type="OrthoDB" id="9802471at2"/>
<dbReference type="BioCyc" id="LBIF456481:LEPBI_RS03945-MONOMER"/>
<dbReference type="Proteomes" id="UP000001847">
    <property type="component" value="Chromosome I"/>
</dbReference>
<dbReference type="GO" id="GO:0005886">
    <property type="term" value="C:plasma membrane"/>
    <property type="evidence" value="ECO:0007669"/>
    <property type="project" value="UniProtKB-SubCell"/>
</dbReference>
<dbReference type="GO" id="GO:0045259">
    <property type="term" value="C:proton-transporting ATP synthase complex"/>
    <property type="evidence" value="ECO:0007669"/>
    <property type="project" value="UniProtKB-KW"/>
</dbReference>
<dbReference type="GO" id="GO:0046933">
    <property type="term" value="F:proton-transporting ATP synthase activity, rotational mechanism"/>
    <property type="evidence" value="ECO:0007669"/>
    <property type="project" value="UniProtKB-UniRule"/>
</dbReference>
<dbReference type="Gene3D" id="1.10.520.20">
    <property type="entry name" value="N-terminal domain of the delta subunit of the F1F0-ATP synthase"/>
    <property type="match status" value="1"/>
</dbReference>
<dbReference type="HAMAP" id="MF_01416">
    <property type="entry name" value="ATP_synth_delta_bact"/>
    <property type="match status" value="1"/>
</dbReference>
<dbReference type="InterPro" id="IPR026015">
    <property type="entry name" value="ATP_synth_OSCP/delta_N_sf"/>
</dbReference>
<dbReference type="InterPro" id="IPR000711">
    <property type="entry name" value="ATPase_OSCP/dsu"/>
</dbReference>
<dbReference type="NCBIfam" id="TIGR01145">
    <property type="entry name" value="ATP_synt_delta"/>
    <property type="match status" value="1"/>
</dbReference>
<dbReference type="NCBIfam" id="NF009969">
    <property type="entry name" value="PRK13434.1"/>
    <property type="match status" value="1"/>
</dbReference>
<dbReference type="PANTHER" id="PTHR11910">
    <property type="entry name" value="ATP SYNTHASE DELTA CHAIN"/>
    <property type="match status" value="1"/>
</dbReference>
<dbReference type="Pfam" id="PF00213">
    <property type="entry name" value="OSCP"/>
    <property type="match status" value="1"/>
</dbReference>
<dbReference type="PRINTS" id="PR00125">
    <property type="entry name" value="ATPASEDELTA"/>
</dbReference>
<dbReference type="SUPFAM" id="SSF47928">
    <property type="entry name" value="N-terminal domain of the delta subunit of the F1F0-ATP synthase"/>
    <property type="match status" value="1"/>
</dbReference>
<comment type="function">
    <text evidence="1">F(1)F(0) ATP synthase produces ATP from ADP in the presence of a proton or sodium gradient. F-type ATPases consist of two structural domains, F(1) containing the extramembraneous catalytic core and F(0) containing the membrane proton channel, linked together by a central stalk and a peripheral stalk. During catalysis, ATP synthesis in the catalytic domain of F(1) is coupled via a rotary mechanism of the central stalk subunits to proton translocation.</text>
</comment>
<comment type="function">
    <text evidence="1">This protein is part of the stalk that links CF(0) to CF(1). It either transmits conformational changes from CF(0) to CF(1) or is implicated in proton conduction.</text>
</comment>
<comment type="subunit">
    <text evidence="1">F-type ATPases have 2 components, F(1) - the catalytic core - and F(0) - the membrane proton channel. F(1) has five subunits: alpha(3), beta(3), gamma(1), delta(1), epsilon(1). F(0) has three main subunits: a(1), b(2) and c(10-14). The alpha and beta chains form an alternating ring which encloses part of the gamma chain. F(1) is attached to F(0) by a central stalk formed by the gamma and epsilon chains, while a peripheral stalk is formed by the delta and b chains.</text>
</comment>
<comment type="subcellular location">
    <subcellularLocation>
        <location evidence="1">Cell inner membrane</location>
        <topology evidence="1">Peripheral membrane protein</topology>
    </subcellularLocation>
</comment>
<comment type="similarity">
    <text evidence="1">Belongs to the ATPase delta chain family.</text>
</comment>
<accession>B0SLC5</accession>
<organism>
    <name type="scientific">Leptospira biflexa serovar Patoc (strain Patoc 1 / ATCC 23582 / Paris)</name>
    <dbReference type="NCBI Taxonomy" id="456481"/>
    <lineage>
        <taxon>Bacteria</taxon>
        <taxon>Pseudomonadati</taxon>
        <taxon>Spirochaetota</taxon>
        <taxon>Spirochaetia</taxon>
        <taxon>Leptospirales</taxon>
        <taxon>Leptospiraceae</taxon>
        <taxon>Leptospira</taxon>
    </lineage>
</organism>
<keyword id="KW-0066">ATP synthesis</keyword>
<keyword id="KW-0997">Cell inner membrane</keyword>
<keyword id="KW-1003">Cell membrane</keyword>
<keyword id="KW-0139">CF(1)</keyword>
<keyword id="KW-0375">Hydrogen ion transport</keyword>
<keyword id="KW-0406">Ion transport</keyword>
<keyword id="KW-0472">Membrane</keyword>
<keyword id="KW-1185">Reference proteome</keyword>
<keyword id="KW-0813">Transport</keyword>
<proteinExistence type="inferred from homology"/>
<sequence length="187" mass="20889">MSLNQISKVYATALLELAQEANSLESTEEELSSLVGVFFSDDTIRHYFLSPLVDPSEKEQTAAKSVQGKASEIVANFITLVVRKNRFLYLKDILEDYRSGVDRLKNRSSLRIVSKDSLGKEAVDQITKSISSKFGREVRVTEHTDLNLIGGFKIYIDDFLIDASIRAKLAGTREALLQKKIPVGAFE</sequence>